<protein>
    <recommendedName>
        <fullName>Leucine-rich repeat LGI family member 3</fullName>
    </recommendedName>
    <alternativeName>
        <fullName>Leubrin</fullName>
    </alternativeName>
    <alternativeName>
        <fullName>Leucine-rich glioma-inactivated protein 3</fullName>
    </alternativeName>
</protein>
<keyword id="KW-0966">Cell projection</keyword>
<keyword id="KW-0968">Cytoplasmic vesicle</keyword>
<keyword id="KW-0268">Exocytosis</keyword>
<keyword id="KW-0325">Glycoprotein</keyword>
<keyword id="KW-0433">Leucine-rich repeat</keyword>
<keyword id="KW-1185">Reference proteome</keyword>
<keyword id="KW-0677">Repeat</keyword>
<keyword id="KW-0964">Secreted</keyword>
<keyword id="KW-0732">Signal</keyword>
<keyword id="KW-0770">Synapse</keyword>
<keyword id="KW-0771">Synaptosome</keyword>
<feature type="signal peptide" evidence="2">
    <location>
        <begin position="1"/>
        <end position="30"/>
    </location>
</feature>
<feature type="chain" id="PRO_0000017711" description="Leucine-rich repeat LGI family member 3">
    <location>
        <begin position="31"/>
        <end position="548"/>
    </location>
</feature>
<feature type="domain" description="LRRNT">
    <location>
        <begin position="31"/>
        <end position="64"/>
    </location>
</feature>
<feature type="repeat" description="LRR 1">
    <location>
        <begin position="89"/>
        <end position="110"/>
    </location>
</feature>
<feature type="repeat" description="LRR 2">
    <location>
        <begin position="113"/>
        <end position="134"/>
    </location>
</feature>
<feature type="repeat" description="LRR 3">
    <location>
        <begin position="137"/>
        <end position="158"/>
    </location>
</feature>
<feature type="domain" description="LRRCT">
    <location>
        <begin position="170"/>
        <end position="220"/>
    </location>
</feature>
<feature type="repeat" description="EAR 1" evidence="3">
    <location>
        <begin position="222"/>
        <end position="264"/>
    </location>
</feature>
<feature type="repeat" description="EAR 2" evidence="3">
    <location>
        <begin position="268"/>
        <end position="310"/>
    </location>
</feature>
<feature type="repeat" description="EAR 3" evidence="3">
    <location>
        <begin position="314"/>
        <end position="361"/>
    </location>
</feature>
<feature type="repeat" description="EAR 4" evidence="3">
    <location>
        <begin position="363"/>
        <end position="406"/>
    </location>
</feature>
<feature type="repeat" description="EAR 5" evidence="3">
    <location>
        <begin position="410"/>
        <end position="453"/>
    </location>
</feature>
<feature type="repeat" description="EAR 6" evidence="3">
    <location>
        <begin position="455"/>
        <end position="497"/>
    </location>
</feature>
<feature type="repeat" description="EAR 7" evidence="3">
    <location>
        <begin position="501"/>
        <end position="543"/>
    </location>
</feature>
<feature type="glycosylation site" description="N-linked (GlcNAc...) asparagine" evidence="2">
    <location>
        <position position="189"/>
    </location>
</feature>
<feature type="glycosylation site" description="N-linked (GlcNAc...) asparagine" evidence="2">
    <location>
        <position position="311"/>
    </location>
</feature>
<evidence type="ECO:0000250" key="1">
    <source>
        <dbReference type="UniProtKB" id="Q8N145"/>
    </source>
</evidence>
<evidence type="ECO:0000255" key="2"/>
<evidence type="ECO:0000255" key="3">
    <source>
        <dbReference type="PROSITE-ProRule" id="PRU00075"/>
    </source>
</evidence>
<evidence type="ECO:0000269" key="4">
    <source>
    </source>
</evidence>
<evidence type="ECO:0000269" key="5">
    <source>
    </source>
</evidence>
<evidence type="ECO:0000269" key="6">
    <source>
    </source>
</evidence>
<comment type="function">
    <text evidence="4">May participate in the regulation of neuronal exocytosis.</text>
</comment>
<comment type="subunit">
    <text evidence="4">Interacts with STX1A.</text>
</comment>
<comment type="subcellular location">
    <subcellularLocation>
        <location evidence="1">Secreted</location>
    </subcellularLocation>
    <subcellularLocation>
        <location evidence="4">Cytoplasmic vesicle</location>
        <location evidence="4">Secretory vesicle</location>
        <location evidence="4">Synaptic vesicle</location>
    </subcellularLocation>
    <subcellularLocation>
        <location evidence="4">Synapse</location>
        <location evidence="4">Synaptosome</location>
    </subcellularLocation>
    <subcellularLocation>
        <location evidence="6">Cell projection</location>
        <location evidence="6">Axon</location>
    </subcellularLocation>
    <text evidence="6">Found in the synaptosomal membrane fraction. Within peripheral myelinated axons, LGI3 is highly expressed at the juxtaparanodal membrane and colocalizes with the voltage-gated potassium channels Kv1.1 (KCNA1) and Kv1.2 (KCNA2), and CNTNAP2, DLG4, ADAM22 and ADAM23 (PubMed:35948005).</text>
</comment>
<comment type="tissue specificity">
    <text evidence="5">Brain.</text>
</comment>
<comment type="disruption phenotype">
    <text evidence="6">LGI3-null mice are fertile, have a normal lifespan, and do not show obvious behavioral abnormalities. They show strongly reduced expression and mislocalization of Kv1 channel complexes that infringe on the paranodal domain. Kv1 channel complexes mislocalization is further exacerbated following nerve injury, as Kv1 complexes are confined to the paranodal domain in remyelinated axons.</text>
</comment>
<accession>Q8K406</accession>
<organism>
    <name type="scientific">Mus musculus</name>
    <name type="common">Mouse</name>
    <dbReference type="NCBI Taxonomy" id="10090"/>
    <lineage>
        <taxon>Eukaryota</taxon>
        <taxon>Metazoa</taxon>
        <taxon>Chordata</taxon>
        <taxon>Craniata</taxon>
        <taxon>Vertebrata</taxon>
        <taxon>Euteleostomi</taxon>
        <taxon>Mammalia</taxon>
        <taxon>Eutheria</taxon>
        <taxon>Euarchontoglires</taxon>
        <taxon>Glires</taxon>
        <taxon>Rodentia</taxon>
        <taxon>Myomorpha</taxon>
        <taxon>Muroidea</taxon>
        <taxon>Muridae</taxon>
        <taxon>Murinae</taxon>
        <taxon>Mus</taxon>
        <taxon>Mus</taxon>
    </lineage>
</organism>
<gene>
    <name type="primary">Lgi3</name>
</gene>
<proteinExistence type="evidence at protein level"/>
<name>LGI3_MOUSE</name>
<reference key="1">
    <citation type="submission" date="2002-11" db="EMBL/GenBank/DDBJ databases">
        <authorList>
            <person name="Yun H.-Y."/>
            <person name="Lee S.E."/>
        </authorList>
    </citation>
    <scope>NUCLEOTIDE SEQUENCE [MRNA]</scope>
    <source>
        <strain>BALB/cJ</strain>
        <tissue>Brain</tissue>
    </source>
</reference>
<reference key="2">
    <citation type="journal article" date="2005" name="Science">
        <title>The transcriptional landscape of the mammalian genome.</title>
        <authorList>
            <person name="Carninci P."/>
            <person name="Kasukawa T."/>
            <person name="Katayama S."/>
            <person name="Gough J."/>
            <person name="Frith M.C."/>
            <person name="Maeda N."/>
            <person name="Oyama R."/>
            <person name="Ravasi T."/>
            <person name="Lenhard B."/>
            <person name="Wells C."/>
            <person name="Kodzius R."/>
            <person name="Shimokawa K."/>
            <person name="Bajic V.B."/>
            <person name="Brenner S.E."/>
            <person name="Batalov S."/>
            <person name="Forrest A.R."/>
            <person name="Zavolan M."/>
            <person name="Davis M.J."/>
            <person name="Wilming L.G."/>
            <person name="Aidinis V."/>
            <person name="Allen J.E."/>
            <person name="Ambesi-Impiombato A."/>
            <person name="Apweiler R."/>
            <person name="Aturaliya R.N."/>
            <person name="Bailey T.L."/>
            <person name="Bansal M."/>
            <person name="Baxter L."/>
            <person name="Beisel K.W."/>
            <person name="Bersano T."/>
            <person name="Bono H."/>
            <person name="Chalk A.M."/>
            <person name="Chiu K.P."/>
            <person name="Choudhary V."/>
            <person name="Christoffels A."/>
            <person name="Clutterbuck D.R."/>
            <person name="Crowe M.L."/>
            <person name="Dalla E."/>
            <person name="Dalrymple B.P."/>
            <person name="de Bono B."/>
            <person name="Della Gatta G."/>
            <person name="di Bernardo D."/>
            <person name="Down T."/>
            <person name="Engstrom P."/>
            <person name="Fagiolini M."/>
            <person name="Faulkner G."/>
            <person name="Fletcher C.F."/>
            <person name="Fukushima T."/>
            <person name="Furuno M."/>
            <person name="Futaki S."/>
            <person name="Gariboldi M."/>
            <person name="Georgii-Hemming P."/>
            <person name="Gingeras T.R."/>
            <person name="Gojobori T."/>
            <person name="Green R.E."/>
            <person name="Gustincich S."/>
            <person name="Harbers M."/>
            <person name="Hayashi Y."/>
            <person name="Hensch T.K."/>
            <person name="Hirokawa N."/>
            <person name="Hill D."/>
            <person name="Huminiecki L."/>
            <person name="Iacono M."/>
            <person name="Ikeo K."/>
            <person name="Iwama A."/>
            <person name="Ishikawa T."/>
            <person name="Jakt M."/>
            <person name="Kanapin A."/>
            <person name="Katoh M."/>
            <person name="Kawasawa Y."/>
            <person name="Kelso J."/>
            <person name="Kitamura H."/>
            <person name="Kitano H."/>
            <person name="Kollias G."/>
            <person name="Krishnan S.P."/>
            <person name="Kruger A."/>
            <person name="Kummerfeld S.K."/>
            <person name="Kurochkin I.V."/>
            <person name="Lareau L.F."/>
            <person name="Lazarevic D."/>
            <person name="Lipovich L."/>
            <person name="Liu J."/>
            <person name="Liuni S."/>
            <person name="McWilliam S."/>
            <person name="Madan Babu M."/>
            <person name="Madera M."/>
            <person name="Marchionni L."/>
            <person name="Matsuda H."/>
            <person name="Matsuzawa S."/>
            <person name="Miki H."/>
            <person name="Mignone F."/>
            <person name="Miyake S."/>
            <person name="Morris K."/>
            <person name="Mottagui-Tabar S."/>
            <person name="Mulder N."/>
            <person name="Nakano N."/>
            <person name="Nakauchi H."/>
            <person name="Ng P."/>
            <person name="Nilsson R."/>
            <person name="Nishiguchi S."/>
            <person name="Nishikawa S."/>
            <person name="Nori F."/>
            <person name="Ohara O."/>
            <person name="Okazaki Y."/>
            <person name="Orlando V."/>
            <person name="Pang K.C."/>
            <person name="Pavan W.J."/>
            <person name="Pavesi G."/>
            <person name="Pesole G."/>
            <person name="Petrovsky N."/>
            <person name="Piazza S."/>
            <person name="Reed J."/>
            <person name="Reid J.F."/>
            <person name="Ring B.Z."/>
            <person name="Ringwald M."/>
            <person name="Rost B."/>
            <person name="Ruan Y."/>
            <person name="Salzberg S.L."/>
            <person name="Sandelin A."/>
            <person name="Schneider C."/>
            <person name="Schoenbach C."/>
            <person name="Sekiguchi K."/>
            <person name="Semple C.A."/>
            <person name="Seno S."/>
            <person name="Sessa L."/>
            <person name="Sheng Y."/>
            <person name="Shibata Y."/>
            <person name="Shimada H."/>
            <person name="Shimada K."/>
            <person name="Silva D."/>
            <person name="Sinclair B."/>
            <person name="Sperling S."/>
            <person name="Stupka E."/>
            <person name="Sugiura K."/>
            <person name="Sultana R."/>
            <person name="Takenaka Y."/>
            <person name="Taki K."/>
            <person name="Tammoja K."/>
            <person name="Tan S.L."/>
            <person name="Tang S."/>
            <person name="Taylor M.S."/>
            <person name="Tegner J."/>
            <person name="Teichmann S.A."/>
            <person name="Ueda H.R."/>
            <person name="van Nimwegen E."/>
            <person name="Verardo R."/>
            <person name="Wei C.L."/>
            <person name="Yagi K."/>
            <person name="Yamanishi H."/>
            <person name="Zabarovsky E."/>
            <person name="Zhu S."/>
            <person name="Zimmer A."/>
            <person name="Hide W."/>
            <person name="Bult C."/>
            <person name="Grimmond S.M."/>
            <person name="Teasdale R.D."/>
            <person name="Liu E.T."/>
            <person name="Brusic V."/>
            <person name="Quackenbush J."/>
            <person name="Wahlestedt C."/>
            <person name="Mattick J.S."/>
            <person name="Hume D.A."/>
            <person name="Kai C."/>
            <person name="Sasaki D."/>
            <person name="Tomaru Y."/>
            <person name="Fukuda S."/>
            <person name="Kanamori-Katayama M."/>
            <person name="Suzuki M."/>
            <person name="Aoki J."/>
            <person name="Arakawa T."/>
            <person name="Iida J."/>
            <person name="Imamura K."/>
            <person name="Itoh M."/>
            <person name="Kato T."/>
            <person name="Kawaji H."/>
            <person name="Kawagashira N."/>
            <person name="Kawashima T."/>
            <person name="Kojima M."/>
            <person name="Kondo S."/>
            <person name="Konno H."/>
            <person name="Nakano K."/>
            <person name="Ninomiya N."/>
            <person name="Nishio T."/>
            <person name="Okada M."/>
            <person name="Plessy C."/>
            <person name="Shibata K."/>
            <person name="Shiraki T."/>
            <person name="Suzuki S."/>
            <person name="Tagami M."/>
            <person name="Waki K."/>
            <person name="Watahiki A."/>
            <person name="Okamura-Oho Y."/>
            <person name="Suzuki H."/>
            <person name="Kawai J."/>
            <person name="Hayashizaki Y."/>
        </authorList>
    </citation>
    <scope>NUCLEOTIDE SEQUENCE [LARGE SCALE MRNA]</scope>
    <source>
        <strain>C57BL/6J</strain>
        <tissue>Hippocampus</tissue>
    </source>
</reference>
<reference key="3">
    <citation type="journal article" date="2004" name="Genome Res.">
        <title>The status, quality, and expansion of the NIH full-length cDNA project: the Mammalian Gene Collection (MGC).</title>
        <authorList>
            <consortium name="The MGC Project Team"/>
        </authorList>
    </citation>
    <scope>NUCLEOTIDE SEQUENCE [LARGE SCALE MRNA]</scope>
    <source>
        <strain>C57BL/6J</strain>
        <tissue>Brain</tissue>
    </source>
</reference>
<reference key="4">
    <citation type="journal article" date="2008" name="Neurosci. Lett.">
        <title>Leucine-rich glioma inactivated 3 associates with syntaxin 1.</title>
        <authorList>
            <person name="Park W.-J."/>
            <person name="Lee S.E."/>
            <person name="Kwon N.S."/>
            <person name="Baek K.J."/>
            <person name="Kim D.-S."/>
            <person name="Yun H.-Y."/>
        </authorList>
    </citation>
    <scope>FUNCTION</scope>
    <scope>SUBCELLULAR LOCATION</scope>
    <scope>INTERACTION WITH STX1A</scope>
</reference>
<reference key="5">
    <citation type="journal article" date="2010" name="Brain Res.">
        <title>Regional distribution of the leucine-rich glioma inactivated (LGI) gene family transcripts in the adult mouse brain.</title>
        <authorList>
            <person name="Herranz-Perez V."/>
            <person name="Olucha-Bordonau F.E."/>
            <person name="Morante-Redolat J.M."/>
            <person name="Perez-Tur J."/>
        </authorList>
    </citation>
    <scope>TISSUE SPECIFICITY</scope>
</reference>
<reference key="6">
    <citation type="journal article" date="2010" name="Cell">
        <title>A tissue-specific atlas of mouse protein phosphorylation and expression.</title>
        <authorList>
            <person name="Huttlin E.L."/>
            <person name="Jedrychowski M.P."/>
            <person name="Elias J.E."/>
            <person name="Goswami T."/>
            <person name="Rad R."/>
            <person name="Beausoleil S.A."/>
            <person name="Villen J."/>
            <person name="Haas W."/>
            <person name="Sowa M.E."/>
            <person name="Gygi S.P."/>
        </authorList>
    </citation>
    <scope>IDENTIFICATION BY MASS SPECTROMETRY [LARGE SCALE ANALYSIS]</scope>
    <source>
        <tissue>Brain</tissue>
    </source>
</reference>
<reference key="7">
    <citation type="journal article" date="2022" name="Am. J. Hum. Genet.">
        <title>A reverse genetics and genomics approach to gene paralog function and disease: Myokymia and the juxtaparanode.</title>
        <authorList>
            <person name="Marafi D."/>
            <person name="Kozar N."/>
            <person name="Duan R."/>
            <person name="Bradley S."/>
            <person name="Yokochi K."/>
            <person name="Al Mutairi F."/>
            <person name="Saadi N.W."/>
            <person name="Whalen S."/>
            <person name="Brunet T."/>
            <person name="Kotzaeridou U."/>
            <person name="Choukair D."/>
            <person name="Keren B."/>
            <person name="Nava C."/>
            <person name="Kato M."/>
            <person name="Arai H."/>
            <person name="Froukh T."/>
            <person name="Faqeih E.A."/>
            <person name="Al Asmari A.M."/>
            <person name="Saleh M.M."/>
            <person name="Pinto Vairo F."/>
            <person name="Pichurin P.N."/>
            <person name="Klee E.W."/>
            <person name="Schmitz C.T."/>
            <person name="Grochowski C.M."/>
            <person name="Mitani T."/>
            <person name="Herman I."/>
            <person name="Calame D.G."/>
            <person name="Fatih J.M."/>
            <person name="Du H."/>
            <person name="Coban-Akdemir Z."/>
            <person name="Pehlivan D."/>
            <person name="Jhangiani S.N."/>
            <person name="Gibbs R.A."/>
            <person name="Miyatake S."/>
            <person name="Matsumoto N."/>
            <person name="Wagstaff L.J."/>
            <person name="Posey J.E."/>
            <person name="Lupski J.R."/>
            <person name="Meijer D."/>
            <person name="Wagner M."/>
        </authorList>
    </citation>
    <scope>SUBCELLULAR LOCATION</scope>
    <scope>DISRUPTION PHENOTYPE</scope>
</reference>
<sequence length="548" mass="61818">MAGLRARRGPGRRLLVLSTLGFCLMLQVSAKRPPKTPPCPPSCSCTRDTAFCVDSKSVPKNLPSEVISLTLVNAAFSEIQDGAFSHLPLLQFLLLNSNKFTLIGDNAFIGLSHLQYLFIENNDIWALSKFTFRGLKSLTHLSLANNNLQTLPRDIFRPLDILSDLDLRGNALNCDCKVKWLVEWLAHTNTTVAPIYCASPPRFQEHKVQDLPLREFDCITTDFVLYQTLSFPAVSAEPFLYSSDLYLALAQPGASACTILKWDYVERQLRDYDRIPAPSAVHCKPMVVDGQLYVVVAQLFGGSYIYHWDPNTTRFTKLQDIDPQRVRKPNDLEAFRIDGDWFFAVADSSKAGATSLYRWHQNGFYSHQALHAWHRDTDLEFVDGEGKPRLIVSSSSQAPVIYQWSRSQKQFVAQGEVTQVPDAQAVKHFRAGRDSYLCLSRYIGDSKILRWEGTRFSEVQALPSRGSLALQPFLVGGHRYLALGSDFSFTQIYQWDEGRQKFVRFQELAVQAPRAFCYMPAGDAQLLLAPSFKGQTLVYRHVVVDLSA</sequence>
<dbReference type="EMBL" id="AF515590">
    <property type="protein sequence ID" value="AAM55219.1"/>
    <property type="molecule type" value="mRNA"/>
</dbReference>
<dbReference type="EMBL" id="AY174077">
    <property type="protein sequence ID" value="AAO19739.1"/>
    <property type="molecule type" value="mRNA"/>
</dbReference>
<dbReference type="EMBL" id="AK049831">
    <property type="protein sequence ID" value="BAC33943.1"/>
    <property type="molecule type" value="mRNA"/>
</dbReference>
<dbReference type="EMBL" id="BC055315">
    <property type="protein sequence ID" value="AAH55315.1"/>
    <property type="molecule type" value="mRNA"/>
</dbReference>
<dbReference type="EMBL" id="BC061460">
    <property type="protein sequence ID" value="AAH61460.1"/>
    <property type="molecule type" value="mRNA"/>
</dbReference>
<dbReference type="CCDS" id="CCDS27255.1"/>
<dbReference type="RefSeq" id="NP_001412575.1">
    <property type="nucleotide sequence ID" value="NM_001425646.1"/>
</dbReference>
<dbReference type="RefSeq" id="NP_660254.1">
    <property type="nucleotide sequence ID" value="NM_145219.5"/>
</dbReference>
<dbReference type="SMR" id="Q8K406"/>
<dbReference type="BioGRID" id="229437">
    <property type="interactions" value="1"/>
</dbReference>
<dbReference type="FunCoup" id="Q8K406">
    <property type="interactions" value="62"/>
</dbReference>
<dbReference type="STRING" id="10090.ENSMUSP00000046705"/>
<dbReference type="GlyCosmos" id="Q8K406">
    <property type="glycosylation" value="2 sites, No reported glycans"/>
</dbReference>
<dbReference type="GlyGen" id="Q8K406">
    <property type="glycosylation" value="3 sites, 1 O-linked glycan (1 site)"/>
</dbReference>
<dbReference type="iPTMnet" id="Q8K406"/>
<dbReference type="PhosphoSitePlus" id="Q8K406"/>
<dbReference type="SwissPalm" id="Q8K406"/>
<dbReference type="PaxDb" id="10090-ENSMUSP00000046705"/>
<dbReference type="ProteomicsDB" id="286189"/>
<dbReference type="Antibodypedia" id="22532">
    <property type="antibodies" value="145 antibodies from 25 providers"/>
</dbReference>
<dbReference type="DNASU" id="213469"/>
<dbReference type="Ensembl" id="ENSMUST00000047331.8">
    <property type="protein sequence ID" value="ENSMUSP00000046705.7"/>
    <property type="gene ID" value="ENSMUSG00000033595.8"/>
</dbReference>
<dbReference type="GeneID" id="213469"/>
<dbReference type="KEGG" id="mmu:213469"/>
<dbReference type="UCSC" id="uc007uoh.2">
    <property type="organism name" value="mouse"/>
</dbReference>
<dbReference type="AGR" id="MGI:2182619"/>
<dbReference type="CTD" id="203190"/>
<dbReference type="MGI" id="MGI:2182619">
    <property type="gene designation" value="Lgi3"/>
</dbReference>
<dbReference type="VEuPathDB" id="HostDB:ENSMUSG00000033595"/>
<dbReference type="eggNOG" id="ENOG502QSAR">
    <property type="taxonomic scope" value="Eukaryota"/>
</dbReference>
<dbReference type="GeneTree" id="ENSGT00940000160296"/>
<dbReference type="HOGENOM" id="CLU_036403_0_0_1"/>
<dbReference type="InParanoid" id="Q8K406"/>
<dbReference type="OMA" id="WDTNIDK"/>
<dbReference type="OrthoDB" id="6066926at2759"/>
<dbReference type="PhylomeDB" id="Q8K406"/>
<dbReference type="TreeFam" id="TF333155"/>
<dbReference type="Reactome" id="R-MMU-5682910">
    <property type="pathway name" value="LGI-ADAM interactions"/>
</dbReference>
<dbReference type="BioGRID-ORCS" id="213469">
    <property type="hits" value="2 hits in 76 CRISPR screens"/>
</dbReference>
<dbReference type="CD-CODE" id="CE726F99">
    <property type="entry name" value="Postsynaptic density"/>
</dbReference>
<dbReference type="PRO" id="PR:Q8K406"/>
<dbReference type="Proteomes" id="UP000000589">
    <property type="component" value="Chromosome 14"/>
</dbReference>
<dbReference type="RNAct" id="Q8K406">
    <property type="molecule type" value="protein"/>
</dbReference>
<dbReference type="Bgee" id="ENSMUSG00000033595">
    <property type="expression patterns" value="Expressed in primary visual cortex and 164 other cell types or tissues"/>
</dbReference>
<dbReference type="ExpressionAtlas" id="Q8K406">
    <property type="expression patterns" value="baseline and differential"/>
</dbReference>
<dbReference type="GO" id="GO:0005615">
    <property type="term" value="C:extracellular space"/>
    <property type="evidence" value="ECO:0000250"/>
    <property type="project" value="UniProtKB"/>
</dbReference>
<dbReference type="GO" id="GO:0044224">
    <property type="term" value="C:juxtaparanode region of axon"/>
    <property type="evidence" value="ECO:0000314"/>
    <property type="project" value="UniProtKB"/>
</dbReference>
<dbReference type="GO" id="GO:0008021">
    <property type="term" value="C:synaptic vesicle"/>
    <property type="evidence" value="ECO:0000314"/>
    <property type="project" value="UniProtKB"/>
</dbReference>
<dbReference type="GO" id="GO:0006887">
    <property type="term" value="P:exocytosis"/>
    <property type="evidence" value="ECO:0007669"/>
    <property type="project" value="UniProtKB-KW"/>
</dbReference>
<dbReference type="GO" id="GO:0017157">
    <property type="term" value="P:regulation of exocytosis"/>
    <property type="evidence" value="ECO:0000314"/>
    <property type="project" value="UniProtKB"/>
</dbReference>
<dbReference type="FunFam" id="3.80.10.10:FF:000017">
    <property type="entry name" value="leucine-rich repeat LGI family member 3"/>
    <property type="match status" value="1"/>
</dbReference>
<dbReference type="Gene3D" id="3.80.10.10">
    <property type="entry name" value="Ribonuclease Inhibitor"/>
    <property type="match status" value="1"/>
</dbReference>
<dbReference type="InterPro" id="IPR000483">
    <property type="entry name" value="Cys-rich_flank_reg_C"/>
</dbReference>
<dbReference type="InterPro" id="IPR009039">
    <property type="entry name" value="EAR"/>
</dbReference>
<dbReference type="InterPro" id="IPR005492">
    <property type="entry name" value="EPTP"/>
</dbReference>
<dbReference type="InterPro" id="IPR001611">
    <property type="entry name" value="Leu-rich_rpt"/>
</dbReference>
<dbReference type="InterPro" id="IPR003591">
    <property type="entry name" value="Leu-rich_rpt_typical-subtyp"/>
</dbReference>
<dbReference type="InterPro" id="IPR051295">
    <property type="entry name" value="LGI_related"/>
</dbReference>
<dbReference type="InterPro" id="IPR032675">
    <property type="entry name" value="LRR_dom_sf"/>
</dbReference>
<dbReference type="InterPro" id="IPR011041">
    <property type="entry name" value="Quinoprot_gluc/sorb_DH_b-prop"/>
</dbReference>
<dbReference type="PANTHER" id="PTHR24367:SF10">
    <property type="entry name" value="LEUCINE-RICH REPEAT LGI FAMILY MEMBER 3"/>
    <property type="match status" value="1"/>
</dbReference>
<dbReference type="PANTHER" id="PTHR24367">
    <property type="entry name" value="LEUCINE-RICH REPEAT-CONTAINING PROTEIN"/>
    <property type="match status" value="1"/>
</dbReference>
<dbReference type="Pfam" id="PF03736">
    <property type="entry name" value="EPTP"/>
    <property type="match status" value="7"/>
</dbReference>
<dbReference type="Pfam" id="PF13855">
    <property type="entry name" value="LRR_8"/>
    <property type="match status" value="1"/>
</dbReference>
<dbReference type="SMART" id="SM00369">
    <property type="entry name" value="LRR_TYP"/>
    <property type="match status" value="3"/>
</dbReference>
<dbReference type="SMART" id="SM00082">
    <property type="entry name" value="LRRCT"/>
    <property type="match status" value="1"/>
</dbReference>
<dbReference type="SUPFAM" id="SSF52058">
    <property type="entry name" value="L domain-like"/>
    <property type="match status" value="1"/>
</dbReference>
<dbReference type="SUPFAM" id="SSF50952">
    <property type="entry name" value="Soluble quinoprotein glucose dehydrogenase"/>
    <property type="match status" value="1"/>
</dbReference>
<dbReference type="PROSITE" id="PS50912">
    <property type="entry name" value="EAR"/>
    <property type="match status" value="7"/>
</dbReference>
<dbReference type="PROSITE" id="PS51450">
    <property type="entry name" value="LRR"/>
    <property type="match status" value="3"/>
</dbReference>